<protein>
    <recommendedName>
        <fullName evidence="1">tRNA-specific 2-thiouridylase MnmA</fullName>
        <ecNumber evidence="1">2.8.1.13</ecNumber>
    </recommendedName>
</protein>
<accession>A1K983</accession>
<gene>
    <name evidence="1" type="primary">mnmA</name>
    <name type="ordered locus">azo2772</name>
</gene>
<evidence type="ECO:0000255" key="1">
    <source>
        <dbReference type="HAMAP-Rule" id="MF_00144"/>
    </source>
</evidence>
<feature type="chain" id="PRO_0000349517" description="tRNA-specific 2-thiouridylase MnmA">
    <location>
        <begin position="1"/>
        <end position="365"/>
    </location>
</feature>
<feature type="region of interest" description="Interaction with target base in tRNA" evidence="1">
    <location>
        <begin position="92"/>
        <end position="94"/>
    </location>
</feature>
<feature type="region of interest" description="Interaction with tRNA" evidence="1">
    <location>
        <begin position="147"/>
        <end position="149"/>
    </location>
</feature>
<feature type="region of interest" description="Interaction with tRNA" evidence="1">
    <location>
        <begin position="315"/>
        <end position="316"/>
    </location>
</feature>
<feature type="active site" description="Nucleophile" evidence="1">
    <location>
        <position position="97"/>
    </location>
</feature>
<feature type="active site" description="Cysteine persulfide intermediate" evidence="1">
    <location>
        <position position="197"/>
    </location>
</feature>
<feature type="binding site" evidence="1">
    <location>
        <begin position="6"/>
        <end position="13"/>
    </location>
    <ligand>
        <name>ATP</name>
        <dbReference type="ChEBI" id="CHEBI:30616"/>
    </ligand>
</feature>
<feature type="binding site" evidence="1">
    <location>
        <position position="32"/>
    </location>
    <ligand>
        <name>ATP</name>
        <dbReference type="ChEBI" id="CHEBI:30616"/>
    </ligand>
</feature>
<feature type="binding site" evidence="1">
    <location>
        <position position="121"/>
    </location>
    <ligand>
        <name>ATP</name>
        <dbReference type="ChEBI" id="CHEBI:30616"/>
    </ligand>
</feature>
<feature type="site" description="Interaction with tRNA" evidence="1">
    <location>
        <position position="122"/>
    </location>
</feature>
<feature type="site" description="Interaction with tRNA" evidence="1">
    <location>
        <position position="348"/>
    </location>
</feature>
<feature type="disulfide bond" description="Alternate" evidence="1">
    <location>
        <begin position="97"/>
        <end position="197"/>
    </location>
</feature>
<name>MNMA_AZOSB</name>
<dbReference type="EC" id="2.8.1.13" evidence="1"/>
<dbReference type="EMBL" id="AM406670">
    <property type="protein sequence ID" value="CAL95388.1"/>
    <property type="molecule type" value="Genomic_DNA"/>
</dbReference>
<dbReference type="RefSeq" id="WP_011766498.1">
    <property type="nucleotide sequence ID" value="NC_008702.1"/>
</dbReference>
<dbReference type="SMR" id="A1K983"/>
<dbReference type="STRING" id="62928.azo2772"/>
<dbReference type="KEGG" id="azo:azo2772"/>
<dbReference type="eggNOG" id="COG0482">
    <property type="taxonomic scope" value="Bacteria"/>
</dbReference>
<dbReference type="HOGENOM" id="CLU_035188_1_0_4"/>
<dbReference type="Proteomes" id="UP000002588">
    <property type="component" value="Chromosome"/>
</dbReference>
<dbReference type="GO" id="GO:0005737">
    <property type="term" value="C:cytoplasm"/>
    <property type="evidence" value="ECO:0007669"/>
    <property type="project" value="UniProtKB-SubCell"/>
</dbReference>
<dbReference type="GO" id="GO:0005524">
    <property type="term" value="F:ATP binding"/>
    <property type="evidence" value="ECO:0007669"/>
    <property type="project" value="UniProtKB-KW"/>
</dbReference>
<dbReference type="GO" id="GO:0000049">
    <property type="term" value="F:tRNA binding"/>
    <property type="evidence" value="ECO:0007669"/>
    <property type="project" value="UniProtKB-KW"/>
</dbReference>
<dbReference type="GO" id="GO:0103016">
    <property type="term" value="F:tRNA-uridine 2-sulfurtransferase activity"/>
    <property type="evidence" value="ECO:0007669"/>
    <property type="project" value="UniProtKB-EC"/>
</dbReference>
<dbReference type="GO" id="GO:0002143">
    <property type="term" value="P:tRNA wobble position uridine thiolation"/>
    <property type="evidence" value="ECO:0007669"/>
    <property type="project" value="TreeGrafter"/>
</dbReference>
<dbReference type="CDD" id="cd01998">
    <property type="entry name" value="MnmA_TRMU-like"/>
    <property type="match status" value="1"/>
</dbReference>
<dbReference type="FunFam" id="2.30.30.280:FF:000001">
    <property type="entry name" value="tRNA-specific 2-thiouridylase MnmA"/>
    <property type="match status" value="1"/>
</dbReference>
<dbReference type="FunFam" id="2.40.30.10:FF:000023">
    <property type="entry name" value="tRNA-specific 2-thiouridylase MnmA"/>
    <property type="match status" value="1"/>
</dbReference>
<dbReference type="FunFam" id="3.40.50.620:FF:000004">
    <property type="entry name" value="tRNA-specific 2-thiouridylase MnmA"/>
    <property type="match status" value="1"/>
</dbReference>
<dbReference type="Gene3D" id="2.30.30.280">
    <property type="entry name" value="Adenine nucleotide alpha hydrolases-like domains"/>
    <property type="match status" value="1"/>
</dbReference>
<dbReference type="Gene3D" id="3.40.50.620">
    <property type="entry name" value="HUPs"/>
    <property type="match status" value="1"/>
</dbReference>
<dbReference type="Gene3D" id="2.40.30.10">
    <property type="entry name" value="Translation factors"/>
    <property type="match status" value="1"/>
</dbReference>
<dbReference type="HAMAP" id="MF_00144">
    <property type="entry name" value="tRNA_thiouridyl_MnmA"/>
    <property type="match status" value="1"/>
</dbReference>
<dbReference type="InterPro" id="IPR004506">
    <property type="entry name" value="MnmA-like"/>
</dbReference>
<dbReference type="InterPro" id="IPR046885">
    <property type="entry name" value="MnmA-like_C"/>
</dbReference>
<dbReference type="InterPro" id="IPR046884">
    <property type="entry name" value="MnmA-like_central"/>
</dbReference>
<dbReference type="InterPro" id="IPR023382">
    <property type="entry name" value="MnmA-like_central_sf"/>
</dbReference>
<dbReference type="InterPro" id="IPR014729">
    <property type="entry name" value="Rossmann-like_a/b/a_fold"/>
</dbReference>
<dbReference type="NCBIfam" id="NF001138">
    <property type="entry name" value="PRK00143.1"/>
    <property type="match status" value="1"/>
</dbReference>
<dbReference type="NCBIfam" id="TIGR00420">
    <property type="entry name" value="trmU"/>
    <property type="match status" value="1"/>
</dbReference>
<dbReference type="PANTHER" id="PTHR11933:SF5">
    <property type="entry name" value="MITOCHONDRIAL TRNA-SPECIFIC 2-THIOURIDYLASE 1"/>
    <property type="match status" value="1"/>
</dbReference>
<dbReference type="PANTHER" id="PTHR11933">
    <property type="entry name" value="TRNA 5-METHYLAMINOMETHYL-2-THIOURIDYLATE -METHYLTRANSFERASE"/>
    <property type="match status" value="1"/>
</dbReference>
<dbReference type="Pfam" id="PF03054">
    <property type="entry name" value="tRNA_Me_trans"/>
    <property type="match status" value="1"/>
</dbReference>
<dbReference type="Pfam" id="PF20258">
    <property type="entry name" value="tRNA_Me_trans_C"/>
    <property type="match status" value="1"/>
</dbReference>
<dbReference type="Pfam" id="PF20259">
    <property type="entry name" value="tRNA_Me_trans_M"/>
    <property type="match status" value="1"/>
</dbReference>
<dbReference type="SUPFAM" id="SSF52402">
    <property type="entry name" value="Adenine nucleotide alpha hydrolases-like"/>
    <property type="match status" value="1"/>
</dbReference>
<reference key="1">
    <citation type="journal article" date="2006" name="Nat. Biotechnol.">
        <title>Complete genome of the mutualistic, N2-fixing grass endophyte Azoarcus sp. strain BH72.</title>
        <authorList>
            <person name="Krause A."/>
            <person name="Ramakumar A."/>
            <person name="Bartels D."/>
            <person name="Battistoni F."/>
            <person name="Bekel T."/>
            <person name="Boch J."/>
            <person name="Boehm M."/>
            <person name="Friedrich F."/>
            <person name="Hurek T."/>
            <person name="Krause L."/>
            <person name="Linke B."/>
            <person name="McHardy A.C."/>
            <person name="Sarkar A."/>
            <person name="Schneiker S."/>
            <person name="Syed A.A."/>
            <person name="Thauer R."/>
            <person name="Vorhoelter F.-J."/>
            <person name="Weidner S."/>
            <person name="Puehler A."/>
            <person name="Reinhold-Hurek B."/>
            <person name="Kaiser O."/>
            <person name="Goesmann A."/>
        </authorList>
    </citation>
    <scope>NUCLEOTIDE SEQUENCE [LARGE SCALE GENOMIC DNA]</scope>
    <source>
        <strain>BH72</strain>
    </source>
</reference>
<sequence length="365" mass="41000">MKVVVGMSGGVDSSVTALLLKQQGYEVTGLFMKNWEDDDDDEYCSTRQDLVDVASVCDVIGIDLEVVNFSAEYKDRVFADFLREYEAGRTPNPDILCNSEIKFRCFLDHAMQLGAERIATGHYAQVREWINDGRSEFQLLKAEDGTKDQSYFLYRLNQAQLAKTLFPLGGLYKREVRKIAEAAGLHVATKKDSTGICFIGERPFREFLMRYLPTKPGEIRCLDDDRVLGEHQGLMYHTIGQRKGLHIGGIKGNQDEAGEHEAWYVAKKDVKANVLYVVQGHDHPALLKDRLLATDLNWIAGRDPRTHWVYTAKPRYRTADMPCEIDALGEGRAEIAFATPQWALTPGQSVVVYESKVCLGGGVIV</sequence>
<organism>
    <name type="scientific">Azoarcus sp. (strain BH72)</name>
    <dbReference type="NCBI Taxonomy" id="418699"/>
    <lineage>
        <taxon>Bacteria</taxon>
        <taxon>Pseudomonadati</taxon>
        <taxon>Pseudomonadota</taxon>
        <taxon>Betaproteobacteria</taxon>
        <taxon>Rhodocyclales</taxon>
        <taxon>Zoogloeaceae</taxon>
        <taxon>Azoarcus</taxon>
    </lineage>
</organism>
<keyword id="KW-0067">ATP-binding</keyword>
<keyword id="KW-0963">Cytoplasm</keyword>
<keyword id="KW-1015">Disulfide bond</keyword>
<keyword id="KW-0547">Nucleotide-binding</keyword>
<keyword id="KW-1185">Reference proteome</keyword>
<keyword id="KW-0694">RNA-binding</keyword>
<keyword id="KW-0808">Transferase</keyword>
<keyword id="KW-0819">tRNA processing</keyword>
<keyword id="KW-0820">tRNA-binding</keyword>
<comment type="function">
    <text evidence="1">Catalyzes the 2-thiolation of uridine at the wobble position (U34) of tRNA, leading to the formation of s(2)U34.</text>
</comment>
<comment type="catalytic activity">
    <reaction evidence="1">
        <text>S-sulfanyl-L-cysteinyl-[protein] + uridine(34) in tRNA + AH2 + ATP = 2-thiouridine(34) in tRNA + L-cysteinyl-[protein] + A + AMP + diphosphate + H(+)</text>
        <dbReference type="Rhea" id="RHEA:47032"/>
        <dbReference type="Rhea" id="RHEA-COMP:10131"/>
        <dbReference type="Rhea" id="RHEA-COMP:11726"/>
        <dbReference type="Rhea" id="RHEA-COMP:11727"/>
        <dbReference type="Rhea" id="RHEA-COMP:11728"/>
        <dbReference type="ChEBI" id="CHEBI:13193"/>
        <dbReference type="ChEBI" id="CHEBI:15378"/>
        <dbReference type="ChEBI" id="CHEBI:17499"/>
        <dbReference type="ChEBI" id="CHEBI:29950"/>
        <dbReference type="ChEBI" id="CHEBI:30616"/>
        <dbReference type="ChEBI" id="CHEBI:33019"/>
        <dbReference type="ChEBI" id="CHEBI:61963"/>
        <dbReference type="ChEBI" id="CHEBI:65315"/>
        <dbReference type="ChEBI" id="CHEBI:87170"/>
        <dbReference type="ChEBI" id="CHEBI:456215"/>
        <dbReference type="EC" id="2.8.1.13"/>
    </reaction>
</comment>
<comment type="subcellular location">
    <subcellularLocation>
        <location evidence="1">Cytoplasm</location>
    </subcellularLocation>
</comment>
<comment type="similarity">
    <text evidence="1">Belongs to the MnmA/TRMU family.</text>
</comment>
<proteinExistence type="inferred from homology"/>